<proteinExistence type="evidence at protein level"/>
<protein>
    <recommendedName>
        <fullName evidence="5">L-arginine:L-lysine amidinotransferase</fullName>
        <ecNumber evidence="2 4">2.1.4.3</ecNumber>
    </recommendedName>
</protein>
<evidence type="ECO:0000250" key="1">
    <source>
        <dbReference type="UniProtKB" id="P50440"/>
    </source>
</evidence>
<evidence type="ECO:0000269" key="2">
    <source>
    </source>
</evidence>
<evidence type="ECO:0000269" key="3">
    <source>
    </source>
</evidence>
<evidence type="ECO:0000269" key="4">
    <source>
    </source>
</evidence>
<evidence type="ECO:0000303" key="5">
    <source>
    </source>
</evidence>
<evidence type="ECO:0000305" key="6"/>
<evidence type="ECO:0000312" key="7">
    <source>
        <dbReference type="EMBL" id="BAF32885.1"/>
    </source>
</evidence>
<comment type="function">
    <text evidence="2 4">Involved in the biosynthesis of phaseolotoxin, a nonhost-specific toxin which is a key component in the development of the halo blight disease of beans (PubMed:11310742). Catalyzes the transfer of an amidino group from arginine to lysine to produce one molecule of homoarginine and one molecule of ornithine, both being precursors in the biosynthesis of phaseolotoxin (PubMed:11310742, PubMed:27419063). Can also use L-canavanine as an alternative amidine donor with L-ornithine as amidine acceptor (PubMed:27419063).</text>
</comment>
<comment type="catalytic activity">
    <reaction evidence="2 4">
        <text>L-lysine + L-arginine = L-homoarginine + L-ornithine</text>
        <dbReference type="Rhea" id="RHEA:59240"/>
        <dbReference type="ChEBI" id="CHEBI:32551"/>
        <dbReference type="ChEBI" id="CHEBI:32682"/>
        <dbReference type="ChEBI" id="CHEBI:46911"/>
        <dbReference type="ChEBI" id="CHEBI:143006"/>
        <dbReference type="EC" id="2.1.4.3"/>
    </reaction>
</comment>
<comment type="catalytic activity">
    <reaction evidence="4">
        <text>L-canavanine + L-ornithine = L-canaline + L-arginine + H(+)</text>
        <dbReference type="Rhea" id="RHEA:62444"/>
        <dbReference type="ChEBI" id="CHEBI:15378"/>
        <dbReference type="ChEBI" id="CHEBI:32682"/>
        <dbReference type="ChEBI" id="CHEBI:46911"/>
        <dbReference type="ChEBI" id="CHEBI:78902"/>
        <dbReference type="ChEBI" id="CHEBI:145769"/>
        <dbReference type="EC" id="2.1.4.3"/>
    </reaction>
</comment>
<comment type="disruption phenotype">
    <text evidence="2 3">Mutant loses the ability to synthesize homoarginine and phaseolotoxin under permissive conditions.</text>
</comment>
<comment type="similarity">
    <text evidence="6">Belongs to the amidinotransferase family.</text>
</comment>
<feature type="chain" id="PRO_0000450559" description="L-arginine:L-lysine amidinotransferase">
    <location>
        <begin position="1"/>
        <end position="362"/>
    </location>
</feature>
<feature type="active site" evidence="1">
    <location>
        <position position="195"/>
    </location>
</feature>
<feature type="active site" evidence="1">
    <location>
        <position position="244"/>
    </location>
</feature>
<feature type="active site" description="Amidino-cysteine intermediate" evidence="1">
    <location>
        <position position="346"/>
    </location>
</feature>
<feature type="mutagenesis site" description="No change in activity and substrate specificity." evidence="4">
    <original>M</original>
    <variation>P</variation>
    <location>
        <position position="240"/>
    </location>
</feature>
<feature type="mutagenesis site" description="No change in activity and substrate specificity." evidence="4">
    <original>H</original>
    <variation>N</variation>
    <location>
        <position position="241"/>
    </location>
</feature>
<feature type="mutagenesis site" description="Abolishes amidinotransferase activity." evidence="4">
    <original>M</original>
    <variation>S</variation>
    <location>
        <position position="243"/>
    </location>
</feature>
<organism>
    <name type="scientific">Pseudomonas savastanoi pv. phaseolicola</name>
    <name type="common">Pseudomonas syringae pv. phaseolicola</name>
    <dbReference type="NCBI Taxonomy" id="319"/>
    <lineage>
        <taxon>Bacteria</taxon>
        <taxon>Pseudomonadati</taxon>
        <taxon>Pseudomonadota</taxon>
        <taxon>Gammaproteobacteria</taxon>
        <taxon>Pseudomonadales</taxon>
        <taxon>Pseudomonadaceae</taxon>
        <taxon>Pseudomonas</taxon>
    </lineage>
</organism>
<accession>Q9RBU1</accession>
<keyword id="KW-0808">Transferase</keyword>
<name>AMTA_PSESH</name>
<reference key="1">
    <citation type="journal article" date="2001" name="Mol. Plant Microbe Interact.">
        <title>Isolation and characterization of the gene coding for the amidinotransferase involved in the biosynthesis of phaseolotoxin in Pseudomonas syringae pv. phaseolicola.</title>
        <authorList>
            <person name="Hernandez-Guzman G."/>
            <person name="Alvarez-Morales A."/>
        </authorList>
    </citation>
    <scope>NUCLEOTIDE SEQUENCE [GENOMIC DNA]</scope>
    <scope>FUNCTION</scope>
    <scope>CATALYTIC ACTIVITY</scope>
    <scope>DISRUPTION PHENOTYPE</scope>
    <source>
        <strain>NPS 3121</strain>
    </source>
</reference>
<reference key="2">
    <citation type="journal article" date="2006" name="J. Mol. Evol.">
        <title>Comparative analysis of argK-tox clusters and their flanking regions in phaseolotoxin-producing Pseudomonas syringae pathovars.</title>
        <authorList>
            <person name="Genka H."/>
            <person name="Baba T."/>
            <person name="Tsuda M."/>
            <person name="Kanaya S."/>
            <person name="Mori H."/>
            <person name="Yoshida T."/>
            <person name="Noguchi M.T."/>
            <person name="Tsuchiya K."/>
            <person name="Sawada H."/>
        </authorList>
    </citation>
    <scope>NUCLEOTIDE SEQUENCE [GENOMIC DNA]</scope>
    <source>
        <strain>MAFF 302282</strain>
    </source>
</reference>
<reference key="3">
    <citation type="journal article" date="2007" name="J. Bacteriol.">
        <title>Functional characterization of the gene cluster from Pseudomonas syringae pv. phaseolicola NPS3121 involved in synthesis of phaseolotoxin.</title>
        <authorList>
            <person name="Aguilera S."/>
            <person name="Lopez-Lopez K."/>
            <person name="Nieto Y."/>
            <person name="Garciduenas-Pina R."/>
            <person name="Hernandez-Guzman G."/>
            <person name="Hernandez-Flores J.L."/>
            <person name="Murillo J."/>
            <person name="Alvarez-Morales A."/>
        </authorList>
    </citation>
    <scope>NUCLEOTIDE SEQUENCE [GENOMIC DNA]</scope>
    <scope>DISRUPTION PHENOTYPE</scope>
    <source>
        <strain>NPS 3121</strain>
    </source>
</reference>
<reference key="4">
    <citation type="journal article" date="2016" name="FEBS Open Bio">
        <title>Characterization of AmtA, an amidinotransferase involved in the biosynthesis of phaseolotoxins.</title>
        <authorList>
            <person name="Li M."/>
            <person name="Chen L."/>
            <person name="Deng Z."/>
            <person name="Zhao C."/>
        </authorList>
    </citation>
    <scope>FUNCTION</scope>
    <scope>CATALYTIC ACTIVITY</scope>
    <scope>MUTAGENESIS OF MET-240; HIS-241 AND MET-243</scope>
    <source>
        <strain>1448A</strain>
    </source>
</reference>
<dbReference type="EC" id="2.1.4.3" evidence="2 4"/>
<dbReference type="EMBL" id="AF186235">
    <property type="protein sequence ID" value="AAD56249.1"/>
    <property type="molecule type" value="Genomic_DNA"/>
</dbReference>
<dbReference type="EMBL" id="AB237164">
    <property type="protein sequence ID" value="BAF32885.1"/>
    <property type="molecule type" value="Genomic_DNA"/>
</dbReference>
<dbReference type="EMBL" id="DQ141263">
    <property type="protein sequence ID" value="AAZ99811.1"/>
    <property type="molecule type" value="Genomic_DNA"/>
</dbReference>
<dbReference type="SMR" id="Q9RBU1"/>
<dbReference type="GO" id="GO:0015068">
    <property type="term" value="F:glycine amidinotransferase activity"/>
    <property type="evidence" value="ECO:0007669"/>
    <property type="project" value="TreeGrafter"/>
</dbReference>
<dbReference type="GO" id="GO:0006601">
    <property type="term" value="P:creatine biosynthetic process"/>
    <property type="evidence" value="ECO:0007669"/>
    <property type="project" value="TreeGrafter"/>
</dbReference>
<dbReference type="CDD" id="cd21136">
    <property type="entry name" value="amidinotransferase_AGAT-like"/>
    <property type="match status" value="1"/>
</dbReference>
<dbReference type="Gene3D" id="3.75.10.10">
    <property type="entry name" value="L-arginine/glycine Amidinotransferase, Chain A"/>
    <property type="match status" value="1"/>
</dbReference>
<dbReference type="InterPro" id="IPR033195">
    <property type="entry name" value="AmidinoTrfase"/>
</dbReference>
<dbReference type="PANTHER" id="PTHR10488">
    <property type="entry name" value="GLYCINE AMIDINOTRANSFERASE, MITOCHONDRIAL"/>
    <property type="match status" value="1"/>
</dbReference>
<dbReference type="PANTHER" id="PTHR10488:SF1">
    <property type="entry name" value="GLYCINE AMIDINOTRANSFERASE, MITOCHONDRIAL"/>
    <property type="match status" value="1"/>
</dbReference>
<dbReference type="SUPFAM" id="SSF55909">
    <property type="entry name" value="Pentein"/>
    <property type="match status" value="1"/>
</dbReference>
<gene>
    <name evidence="5" type="primary">amtA</name>
    <name evidence="7" type="synonym">txi12</name>
</gene>
<sequence>MKKIQTFIQTSPVCSYTEWDLLEEIIVGVVDGACIPPWHAAMEPCLPTQQHQFFRDNAGKPFPQERIDLARKELDEFARILECEGVKVRRPEPKNQSLVYGAPGWSSTGMYAAMPRDVLLVVGTDIIECPLAWRSRYFETAAYKKLLKEYFHGGAKWSSGPKPELSDEQYVDGWVEDEAATSANLVITEFEPTFDAADFTRLGKDIIAQKSNVTNEFGINWLQRHLGDDYKIHVLEFNDMHPMHIDATLVPLAPGKLLINPERVQKMPEIFRGWDAIHAPKPIMPDSHPLYMTSKWINMNILMLDERRVVVERQDEPMIKAMKGAGFEPILCDFRNFNSFGGSFHCATVDIRRRGKLESYLV</sequence>